<keyword id="KW-0025">Alternative splicing</keyword>
<keyword id="KW-0238">DNA-binding</keyword>
<keyword id="KW-0479">Metal-binding</keyword>
<keyword id="KW-0539">Nucleus</keyword>
<keyword id="KW-1267">Proteomics identification</keyword>
<keyword id="KW-1185">Reference proteome</keyword>
<keyword id="KW-0677">Repeat</keyword>
<keyword id="KW-0804">Transcription</keyword>
<keyword id="KW-0805">Transcription regulation</keyword>
<keyword id="KW-0862">Zinc</keyword>
<keyword id="KW-0863">Zinc-finger</keyword>
<dbReference type="EMBL" id="AY280799">
    <property type="protein sequence ID" value="AAQ16303.1"/>
    <property type="molecule type" value="mRNA"/>
</dbReference>
<dbReference type="EMBL" id="AK022957">
    <property type="protein sequence ID" value="BAB14332.1"/>
    <property type="molecule type" value="mRNA"/>
</dbReference>
<dbReference type="EMBL" id="AK294376">
    <property type="protein sequence ID" value="BAG57634.1"/>
    <property type="molecule type" value="mRNA"/>
</dbReference>
<dbReference type="EMBL" id="AC008751">
    <property type="status" value="NOT_ANNOTATED_CDS"/>
    <property type="molecule type" value="Genomic_DNA"/>
</dbReference>
<dbReference type="EMBL" id="BC006205">
    <property type="protein sequence ID" value="AAH06205.2"/>
    <property type="molecule type" value="mRNA"/>
</dbReference>
<dbReference type="EMBL" id="BC022846">
    <property type="protein sequence ID" value="AAH22846.1"/>
    <property type="molecule type" value="mRNA"/>
</dbReference>
<dbReference type="CCDS" id="CCDS12971.1">
    <molecule id="Q8TBC5-1"/>
</dbReference>
<dbReference type="CCDS" id="CCDS46214.1">
    <molecule id="Q8TBC5-3"/>
</dbReference>
<dbReference type="CCDS" id="CCDS46215.1">
    <molecule id="Q8TBC5-4"/>
</dbReference>
<dbReference type="RefSeq" id="NP_001139014.1">
    <molecule id="Q8TBC5-3"/>
    <property type="nucleotide sequence ID" value="NM_001145542.1"/>
</dbReference>
<dbReference type="RefSeq" id="NP_001139015.1">
    <molecule id="Q8TBC5-1"/>
    <property type="nucleotide sequence ID" value="NM_001145543.2"/>
</dbReference>
<dbReference type="RefSeq" id="NP_001139016.1">
    <molecule id="Q8TBC5-4"/>
    <property type="nucleotide sequence ID" value="NM_001145544.2"/>
</dbReference>
<dbReference type="RefSeq" id="NP_076415.3">
    <molecule id="Q8TBC5-1"/>
    <property type="nucleotide sequence ID" value="NM_023926.4"/>
</dbReference>
<dbReference type="RefSeq" id="XP_005259231.1">
    <molecule id="Q8TBC5-1"/>
    <property type="nucleotide sequence ID" value="XM_005259174.6"/>
</dbReference>
<dbReference type="RefSeq" id="XP_006723398.1">
    <molecule id="Q8TBC5-1"/>
    <property type="nucleotide sequence ID" value="XM_006723335.3"/>
</dbReference>
<dbReference type="RefSeq" id="XP_011525540.1">
    <molecule id="Q8TBC5-1"/>
    <property type="nucleotide sequence ID" value="XM_011527238.2"/>
</dbReference>
<dbReference type="RefSeq" id="XP_011525541.1">
    <molecule id="Q8TBC5-1"/>
    <property type="nucleotide sequence ID" value="XM_011527239.4"/>
</dbReference>
<dbReference type="RefSeq" id="XP_016882658.1">
    <molecule id="Q8TBC5-2"/>
    <property type="nucleotide sequence ID" value="XM_017027169.3"/>
</dbReference>
<dbReference type="RefSeq" id="XP_016882659.1">
    <property type="nucleotide sequence ID" value="XM_017027170.1"/>
</dbReference>
<dbReference type="RefSeq" id="XP_016882660.1">
    <property type="nucleotide sequence ID" value="XM_017027171.1"/>
</dbReference>
<dbReference type="SMR" id="Q8TBC5"/>
<dbReference type="BioGRID" id="122432">
    <property type="interactions" value="51"/>
</dbReference>
<dbReference type="FunCoup" id="Q8TBC5">
    <property type="interactions" value="104"/>
</dbReference>
<dbReference type="IntAct" id="Q8TBC5">
    <property type="interactions" value="34"/>
</dbReference>
<dbReference type="MINT" id="Q8TBC5"/>
<dbReference type="STRING" id="9606.ENSP00000470123"/>
<dbReference type="GlyGen" id="Q8TBC5">
    <property type="glycosylation" value="1 site"/>
</dbReference>
<dbReference type="iPTMnet" id="Q8TBC5"/>
<dbReference type="PhosphoSitePlus" id="Q8TBC5"/>
<dbReference type="BioMuta" id="ZSCAN18"/>
<dbReference type="DMDM" id="148887469"/>
<dbReference type="jPOST" id="Q8TBC5"/>
<dbReference type="MassIVE" id="Q8TBC5"/>
<dbReference type="PaxDb" id="9606-ENSP00000470123"/>
<dbReference type="PeptideAtlas" id="Q8TBC5"/>
<dbReference type="ProteomicsDB" id="19226"/>
<dbReference type="ProteomicsDB" id="73993">
    <molecule id="Q8TBC5-1"/>
</dbReference>
<dbReference type="ProteomicsDB" id="73994">
    <molecule id="Q8TBC5-2"/>
</dbReference>
<dbReference type="ProteomicsDB" id="73995">
    <molecule id="Q8TBC5-3"/>
</dbReference>
<dbReference type="Antibodypedia" id="19678">
    <property type="antibodies" value="334 antibodies from 22 providers"/>
</dbReference>
<dbReference type="DNASU" id="65982"/>
<dbReference type="Ensembl" id="ENST00000240727.10">
    <molecule id="Q8TBC5-1"/>
    <property type="protein sequence ID" value="ENSP00000240727.5"/>
    <property type="gene ID" value="ENSG00000121413.13"/>
</dbReference>
<dbReference type="Ensembl" id="ENST00000421612.6">
    <molecule id="Q8TBC5-4"/>
    <property type="protein sequence ID" value="ENSP00000392653.1"/>
    <property type="gene ID" value="ENSG00000121413.13"/>
</dbReference>
<dbReference type="Ensembl" id="ENST00000600404.1">
    <molecule id="Q8TBC5-3"/>
    <property type="protein sequence ID" value="ENSP00000470123.1"/>
    <property type="gene ID" value="ENSG00000121413.13"/>
</dbReference>
<dbReference type="Ensembl" id="ENST00000601144.6">
    <molecule id="Q8TBC5-1"/>
    <property type="protein sequence ID" value="ENSP00000468934.1"/>
    <property type="gene ID" value="ENSG00000121413.13"/>
</dbReference>
<dbReference type="GeneID" id="65982"/>
<dbReference type="KEGG" id="hsa:65982"/>
<dbReference type="MANE-Select" id="ENST00000601144.6">
    <property type="protein sequence ID" value="ENSP00000468934.1"/>
    <property type="RefSeq nucleotide sequence ID" value="NM_001145543.2"/>
    <property type="RefSeq protein sequence ID" value="NP_001139015.1"/>
</dbReference>
<dbReference type="UCSC" id="uc002qrh.3">
    <molecule id="Q8TBC5-1"/>
    <property type="organism name" value="human"/>
</dbReference>
<dbReference type="AGR" id="HGNC:21037"/>
<dbReference type="CTD" id="65982"/>
<dbReference type="DisGeNET" id="65982"/>
<dbReference type="GeneCards" id="ZSCAN18"/>
<dbReference type="HGNC" id="HGNC:21037">
    <property type="gene designation" value="ZSCAN18"/>
</dbReference>
<dbReference type="HPA" id="ENSG00000121413">
    <property type="expression patterns" value="Low tissue specificity"/>
</dbReference>
<dbReference type="neXtProt" id="NX_Q8TBC5"/>
<dbReference type="OpenTargets" id="ENSG00000121413"/>
<dbReference type="PharmGKB" id="PA162410959"/>
<dbReference type="VEuPathDB" id="HostDB:ENSG00000121413"/>
<dbReference type="eggNOG" id="KOG1721">
    <property type="taxonomic scope" value="Eukaryota"/>
</dbReference>
<dbReference type="GeneTree" id="ENSGT00940000163034"/>
<dbReference type="HOGENOM" id="CLU_002678_49_8_1"/>
<dbReference type="InParanoid" id="Q8TBC5"/>
<dbReference type="OMA" id="AFAWISH"/>
<dbReference type="OrthoDB" id="6077919at2759"/>
<dbReference type="PAN-GO" id="Q8TBC5">
    <property type="GO annotations" value="3 GO annotations based on evolutionary models"/>
</dbReference>
<dbReference type="PhylomeDB" id="Q8TBC5"/>
<dbReference type="PathwayCommons" id="Q8TBC5"/>
<dbReference type="SignaLink" id="Q8TBC5"/>
<dbReference type="BioGRID-ORCS" id="65982">
    <property type="hits" value="14 hits in 1147 CRISPR screens"/>
</dbReference>
<dbReference type="ChiTaRS" id="ZSCAN18">
    <property type="organism name" value="human"/>
</dbReference>
<dbReference type="GenomeRNAi" id="65982"/>
<dbReference type="Pharos" id="Q8TBC5">
    <property type="development level" value="Tdark"/>
</dbReference>
<dbReference type="PRO" id="PR:Q8TBC5"/>
<dbReference type="Proteomes" id="UP000005640">
    <property type="component" value="Chromosome 19"/>
</dbReference>
<dbReference type="RNAct" id="Q8TBC5">
    <property type="molecule type" value="protein"/>
</dbReference>
<dbReference type="Bgee" id="ENSG00000121413">
    <property type="expression patterns" value="Expressed in right uterine tube and 200 other cell types or tissues"/>
</dbReference>
<dbReference type="ExpressionAtlas" id="Q8TBC5">
    <property type="expression patterns" value="baseline and differential"/>
</dbReference>
<dbReference type="GO" id="GO:0005634">
    <property type="term" value="C:nucleus"/>
    <property type="evidence" value="ECO:0007669"/>
    <property type="project" value="UniProtKB-SubCell"/>
</dbReference>
<dbReference type="GO" id="GO:0000981">
    <property type="term" value="F:DNA-binding transcription factor activity, RNA polymerase II-specific"/>
    <property type="evidence" value="ECO:0000318"/>
    <property type="project" value="GO_Central"/>
</dbReference>
<dbReference type="GO" id="GO:0000978">
    <property type="term" value="F:RNA polymerase II cis-regulatory region sequence-specific DNA binding"/>
    <property type="evidence" value="ECO:0000318"/>
    <property type="project" value="GO_Central"/>
</dbReference>
<dbReference type="GO" id="GO:0008270">
    <property type="term" value="F:zinc ion binding"/>
    <property type="evidence" value="ECO:0007669"/>
    <property type="project" value="UniProtKB-KW"/>
</dbReference>
<dbReference type="GO" id="GO:0006357">
    <property type="term" value="P:regulation of transcription by RNA polymerase II"/>
    <property type="evidence" value="ECO:0000318"/>
    <property type="project" value="GO_Central"/>
</dbReference>
<dbReference type="CDD" id="cd07936">
    <property type="entry name" value="SCAN"/>
    <property type="match status" value="1"/>
</dbReference>
<dbReference type="FunFam" id="1.10.4020.10:FF:000001">
    <property type="entry name" value="zinc finger protein 263 isoform X1"/>
    <property type="match status" value="1"/>
</dbReference>
<dbReference type="FunFam" id="3.30.160.60:FF:000340">
    <property type="entry name" value="zinc finger protein 473 isoform X1"/>
    <property type="match status" value="1"/>
</dbReference>
<dbReference type="Gene3D" id="3.30.160.60">
    <property type="entry name" value="Classic Zinc Finger"/>
    <property type="match status" value="2"/>
</dbReference>
<dbReference type="Gene3D" id="1.10.4020.10">
    <property type="entry name" value="DNA breaking-rejoining enzymes"/>
    <property type="match status" value="1"/>
</dbReference>
<dbReference type="InterPro" id="IPR050916">
    <property type="entry name" value="SCAN-C2H2_zinc_finger"/>
</dbReference>
<dbReference type="InterPro" id="IPR003309">
    <property type="entry name" value="SCAN_dom"/>
</dbReference>
<dbReference type="InterPro" id="IPR038269">
    <property type="entry name" value="SCAN_sf"/>
</dbReference>
<dbReference type="InterPro" id="IPR036236">
    <property type="entry name" value="Znf_C2H2_sf"/>
</dbReference>
<dbReference type="InterPro" id="IPR013087">
    <property type="entry name" value="Znf_C2H2_type"/>
</dbReference>
<dbReference type="PANTHER" id="PTHR45935">
    <property type="entry name" value="PROTEIN ZBED8-RELATED"/>
    <property type="match status" value="1"/>
</dbReference>
<dbReference type="PANTHER" id="PTHR45935:SF32">
    <property type="entry name" value="ZINC FINGER AND SCAN DOMAIN CONTAINING 18"/>
    <property type="match status" value="1"/>
</dbReference>
<dbReference type="Pfam" id="PF02023">
    <property type="entry name" value="SCAN"/>
    <property type="match status" value="1"/>
</dbReference>
<dbReference type="SMART" id="SM00431">
    <property type="entry name" value="SCAN"/>
    <property type="match status" value="1"/>
</dbReference>
<dbReference type="SMART" id="SM00355">
    <property type="entry name" value="ZnF_C2H2"/>
    <property type="match status" value="2"/>
</dbReference>
<dbReference type="SUPFAM" id="SSF57667">
    <property type="entry name" value="beta-beta-alpha zinc fingers"/>
    <property type="match status" value="1"/>
</dbReference>
<dbReference type="SUPFAM" id="SSF47353">
    <property type="entry name" value="Retrovirus capsid dimerization domain-like"/>
    <property type="match status" value="1"/>
</dbReference>
<dbReference type="PROSITE" id="PS50804">
    <property type="entry name" value="SCAN_BOX"/>
    <property type="match status" value="1"/>
</dbReference>
<dbReference type="PROSITE" id="PS00028">
    <property type="entry name" value="ZINC_FINGER_C2H2_1"/>
    <property type="match status" value="2"/>
</dbReference>
<dbReference type="PROSITE" id="PS50157">
    <property type="entry name" value="ZINC_FINGER_C2H2_2"/>
    <property type="match status" value="2"/>
</dbReference>
<proteinExistence type="evidence at protein level"/>
<reference key="1">
    <citation type="submission" date="2003-04" db="EMBL/GenBank/DDBJ databases">
        <title>Cloning and characterization of a human novel znf gene.</title>
        <authorList>
            <person name="Luo K.T."/>
            <person name="Yu L."/>
        </authorList>
    </citation>
    <scope>NUCLEOTIDE SEQUENCE [MRNA] (ISOFORM 1)</scope>
    <scope>VARIANT GLU-379</scope>
</reference>
<reference key="2">
    <citation type="journal article" date="2004" name="Nat. Genet.">
        <title>Complete sequencing and characterization of 21,243 full-length human cDNAs.</title>
        <authorList>
            <person name="Ota T."/>
            <person name="Suzuki Y."/>
            <person name="Nishikawa T."/>
            <person name="Otsuki T."/>
            <person name="Sugiyama T."/>
            <person name="Irie R."/>
            <person name="Wakamatsu A."/>
            <person name="Hayashi K."/>
            <person name="Sato H."/>
            <person name="Nagai K."/>
            <person name="Kimura K."/>
            <person name="Makita H."/>
            <person name="Sekine M."/>
            <person name="Obayashi M."/>
            <person name="Nishi T."/>
            <person name="Shibahara T."/>
            <person name="Tanaka T."/>
            <person name="Ishii S."/>
            <person name="Yamamoto J."/>
            <person name="Saito K."/>
            <person name="Kawai Y."/>
            <person name="Isono Y."/>
            <person name="Nakamura Y."/>
            <person name="Nagahari K."/>
            <person name="Murakami K."/>
            <person name="Yasuda T."/>
            <person name="Iwayanagi T."/>
            <person name="Wagatsuma M."/>
            <person name="Shiratori A."/>
            <person name="Sudo H."/>
            <person name="Hosoiri T."/>
            <person name="Kaku Y."/>
            <person name="Kodaira H."/>
            <person name="Kondo H."/>
            <person name="Sugawara M."/>
            <person name="Takahashi M."/>
            <person name="Kanda K."/>
            <person name="Yokoi T."/>
            <person name="Furuya T."/>
            <person name="Kikkawa E."/>
            <person name="Omura Y."/>
            <person name="Abe K."/>
            <person name="Kamihara K."/>
            <person name="Katsuta N."/>
            <person name="Sato K."/>
            <person name="Tanikawa M."/>
            <person name="Yamazaki M."/>
            <person name="Ninomiya K."/>
            <person name="Ishibashi T."/>
            <person name="Yamashita H."/>
            <person name="Murakawa K."/>
            <person name="Fujimori K."/>
            <person name="Tanai H."/>
            <person name="Kimata M."/>
            <person name="Watanabe M."/>
            <person name="Hiraoka S."/>
            <person name="Chiba Y."/>
            <person name="Ishida S."/>
            <person name="Ono Y."/>
            <person name="Takiguchi S."/>
            <person name="Watanabe S."/>
            <person name="Yosida M."/>
            <person name="Hotuta T."/>
            <person name="Kusano J."/>
            <person name="Kanehori K."/>
            <person name="Takahashi-Fujii A."/>
            <person name="Hara H."/>
            <person name="Tanase T.-O."/>
            <person name="Nomura Y."/>
            <person name="Togiya S."/>
            <person name="Komai F."/>
            <person name="Hara R."/>
            <person name="Takeuchi K."/>
            <person name="Arita M."/>
            <person name="Imose N."/>
            <person name="Musashino K."/>
            <person name="Yuuki H."/>
            <person name="Oshima A."/>
            <person name="Sasaki N."/>
            <person name="Aotsuka S."/>
            <person name="Yoshikawa Y."/>
            <person name="Matsunawa H."/>
            <person name="Ichihara T."/>
            <person name="Shiohata N."/>
            <person name="Sano S."/>
            <person name="Moriya S."/>
            <person name="Momiyama H."/>
            <person name="Satoh N."/>
            <person name="Takami S."/>
            <person name="Terashima Y."/>
            <person name="Suzuki O."/>
            <person name="Nakagawa S."/>
            <person name="Senoh A."/>
            <person name="Mizoguchi H."/>
            <person name="Goto Y."/>
            <person name="Shimizu F."/>
            <person name="Wakebe H."/>
            <person name="Hishigaki H."/>
            <person name="Watanabe T."/>
            <person name="Sugiyama A."/>
            <person name="Takemoto M."/>
            <person name="Kawakami B."/>
            <person name="Yamazaki M."/>
            <person name="Watanabe K."/>
            <person name="Kumagai A."/>
            <person name="Itakura S."/>
            <person name="Fukuzumi Y."/>
            <person name="Fujimori Y."/>
            <person name="Komiyama M."/>
            <person name="Tashiro H."/>
            <person name="Tanigami A."/>
            <person name="Fujiwara T."/>
            <person name="Ono T."/>
            <person name="Yamada K."/>
            <person name="Fujii Y."/>
            <person name="Ozaki K."/>
            <person name="Hirao M."/>
            <person name="Ohmori Y."/>
            <person name="Kawabata A."/>
            <person name="Hikiji T."/>
            <person name="Kobatake N."/>
            <person name="Inagaki H."/>
            <person name="Ikema Y."/>
            <person name="Okamoto S."/>
            <person name="Okitani R."/>
            <person name="Kawakami T."/>
            <person name="Noguchi S."/>
            <person name="Itoh T."/>
            <person name="Shigeta K."/>
            <person name="Senba T."/>
            <person name="Matsumura K."/>
            <person name="Nakajima Y."/>
            <person name="Mizuno T."/>
            <person name="Morinaga M."/>
            <person name="Sasaki M."/>
            <person name="Togashi T."/>
            <person name="Oyama M."/>
            <person name="Hata H."/>
            <person name="Watanabe M."/>
            <person name="Komatsu T."/>
            <person name="Mizushima-Sugano J."/>
            <person name="Satoh T."/>
            <person name="Shirai Y."/>
            <person name="Takahashi Y."/>
            <person name="Nakagawa K."/>
            <person name="Okumura K."/>
            <person name="Nagase T."/>
            <person name="Nomura N."/>
            <person name="Kikuchi H."/>
            <person name="Masuho Y."/>
            <person name="Yamashita R."/>
            <person name="Nakai K."/>
            <person name="Yada T."/>
            <person name="Nakamura Y."/>
            <person name="Ohara O."/>
            <person name="Isogai T."/>
            <person name="Sugano S."/>
        </authorList>
    </citation>
    <scope>NUCLEOTIDE SEQUENCE [LARGE SCALE MRNA] (ISOFORMS 1 AND 3)</scope>
    <source>
        <tissue>Amygdala</tissue>
        <tissue>Spleen</tissue>
        <tissue>Teratocarcinoma</tissue>
    </source>
</reference>
<reference key="3">
    <citation type="journal article" date="2004" name="Nature">
        <title>The DNA sequence and biology of human chromosome 19.</title>
        <authorList>
            <person name="Grimwood J."/>
            <person name="Gordon L.A."/>
            <person name="Olsen A.S."/>
            <person name="Terry A."/>
            <person name="Schmutz J."/>
            <person name="Lamerdin J.E."/>
            <person name="Hellsten U."/>
            <person name="Goodstein D."/>
            <person name="Couronne O."/>
            <person name="Tran-Gyamfi M."/>
            <person name="Aerts A."/>
            <person name="Altherr M."/>
            <person name="Ashworth L."/>
            <person name="Bajorek E."/>
            <person name="Black S."/>
            <person name="Branscomb E."/>
            <person name="Caenepeel S."/>
            <person name="Carrano A.V."/>
            <person name="Caoile C."/>
            <person name="Chan Y.M."/>
            <person name="Christensen M."/>
            <person name="Cleland C.A."/>
            <person name="Copeland A."/>
            <person name="Dalin E."/>
            <person name="Dehal P."/>
            <person name="Denys M."/>
            <person name="Detter J.C."/>
            <person name="Escobar J."/>
            <person name="Flowers D."/>
            <person name="Fotopulos D."/>
            <person name="Garcia C."/>
            <person name="Georgescu A.M."/>
            <person name="Glavina T."/>
            <person name="Gomez M."/>
            <person name="Gonzales E."/>
            <person name="Groza M."/>
            <person name="Hammon N."/>
            <person name="Hawkins T."/>
            <person name="Haydu L."/>
            <person name="Ho I."/>
            <person name="Huang W."/>
            <person name="Israni S."/>
            <person name="Jett J."/>
            <person name="Kadner K."/>
            <person name="Kimball H."/>
            <person name="Kobayashi A."/>
            <person name="Larionov V."/>
            <person name="Leem S.-H."/>
            <person name="Lopez F."/>
            <person name="Lou Y."/>
            <person name="Lowry S."/>
            <person name="Malfatti S."/>
            <person name="Martinez D."/>
            <person name="McCready P.M."/>
            <person name="Medina C."/>
            <person name="Morgan J."/>
            <person name="Nelson K."/>
            <person name="Nolan M."/>
            <person name="Ovcharenko I."/>
            <person name="Pitluck S."/>
            <person name="Pollard M."/>
            <person name="Popkie A.P."/>
            <person name="Predki P."/>
            <person name="Quan G."/>
            <person name="Ramirez L."/>
            <person name="Rash S."/>
            <person name="Retterer J."/>
            <person name="Rodriguez A."/>
            <person name="Rogers S."/>
            <person name="Salamov A."/>
            <person name="Salazar A."/>
            <person name="She X."/>
            <person name="Smith D."/>
            <person name="Slezak T."/>
            <person name="Solovyev V."/>
            <person name="Thayer N."/>
            <person name="Tice H."/>
            <person name="Tsai M."/>
            <person name="Ustaszewska A."/>
            <person name="Vo N."/>
            <person name="Wagner M."/>
            <person name="Wheeler J."/>
            <person name="Wu K."/>
            <person name="Xie G."/>
            <person name="Yang J."/>
            <person name="Dubchak I."/>
            <person name="Furey T.S."/>
            <person name="DeJong P."/>
            <person name="Dickson M."/>
            <person name="Gordon D."/>
            <person name="Eichler E.E."/>
            <person name="Pennacchio L.A."/>
            <person name="Richardson P."/>
            <person name="Stubbs L."/>
            <person name="Rokhsar D.S."/>
            <person name="Myers R.M."/>
            <person name="Rubin E.M."/>
            <person name="Lucas S.M."/>
        </authorList>
    </citation>
    <scope>NUCLEOTIDE SEQUENCE [LARGE SCALE GENOMIC DNA]</scope>
</reference>
<reference key="4">
    <citation type="journal article" date="2004" name="Genome Res.">
        <title>The status, quality, and expansion of the NIH full-length cDNA project: the Mammalian Gene Collection (MGC).</title>
        <authorList>
            <consortium name="The MGC Project Team"/>
        </authorList>
    </citation>
    <scope>NUCLEOTIDE SEQUENCE [LARGE SCALE MRNA] (ISOFORM 1)</scope>
    <scope>NUCLEOTIDE SEQUENCE [LARGE SCALE MRNA] OF 103-510 (ISOFORM 2)</scope>
    <scope>VARIANT GLU-379</scope>
    <source>
        <tissue>Muscle</tissue>
        <tissue>Skin</tissue>
    </source>
</reference>
<name>ZSC18_HUMAN</name>
<accession>Q8TBC5</accession>
<accession>B4DG23</accession>
<accession>E9PBI0</accession>
<accession>Q9BRK7</accession>
<accession>Q9H9A0</accession>
<comment type="function">
    <text>May be involved in transcriptional regulation.</text>
</comment>
<comment type="interaction">
    <interactant intactId="EBI-3919096">
        <id>Q8TBC5</id>
    </interactant>
    <interactant intactId="EBI-6255981">
        <id>Q7L775</id>
        <label>EPM2AIP1</label>
    </interactant>
    <organismsDiffer>false</organismsDiffer>
    <experiments>4</experiments>
</comment>
<comment type="interaction">
    <interactant intactId="EBI-3919096">
        <id>Q8TBC5</id>
    </interactant>
    <interactant intactId="EBI-10297077">
        <id>Q9BRP7</id>
        <label>FDXACB1</label>
    </interactant>
    <organismsDiffer>false</organismsDiffer>
    <experiments>3</experiments>
</comment>
<comment type="interaction">
    <interactant intactId="EBI-3919096">
        <id>Q8TBC5</id>
    </interactant>
    <interactant intactId="EBI-10290053">
        <id>Q96JS3</id>
        <label>PGBD1</label>
    </interactant>
    <organismsDiffer>false</organismsDiffer>
    <experiments>4</experiments>
</comment>
<comment type="interaction">
    <interactant intactId="EBI-3919096">
        <id>Q8TBC5</id>
    </interactant>
    <interactant intactId="EBI-745846">
        <id>P57086</id>
        <label>SCAND1</label>
    </interactant>
    <organismsDiffer>false</organismsDiffer>
    <experiments>5</experiments>
</comment>
<comment type="interaction">
    <interactant intactId="EBI-3919096">
        <id>Q8TBC5</id>
    </interactant>
    <interactant intactId="EBI-740595">
        <id>Q9UMX1</id>
        <label>SUFU</label>
    </interactant>
    <organismsDiffer>false</organismsDiffer>
    <experiments>4</experiments>
</comment>
<comment type="interaction">
    <interactant intactId="EBI-3919096">
        <id>Q8TBC5</id>
    </interactant>
    <interactant intactId="EBI-11158827">
        <id>Q15697-2</id>
        <label>ZNF174</label>
    </interactant>
    <organismsDiffer>false</organismsDiffer>
    <experiments>3</experiments>
</comment>
<comment type="interaction">
    <interactant intactId="EBI-3919096">
        <id>Q8TBC5</id>
    </interactant>
    <interactant intactId="EBI-740232">
        <id>Q9NWS9-2</id>
        <label>ZNF446</label>
    </interactant>
    <organismsDiffer>false</organismsDiffer>
    <experiments>3</experiments>
</comment>
<comment type="interaction">
    <interactant intactId="EBI-3919096">
        <id>Q8TBC5</id>
    </interactant>
    <interactant intactId="EBI-10178224">
        <id>P10073</id>
        <label>ZSCAN22</label>
    </interactant>
    <organismsDiffer>false</organismsDiffer>
    <experiments>3</experiments>
</comment>
<comment type="subcellular location">
    <subcellularLocation>
        <location evidence="2">Nucleus</location>
    </subcellularLocation>
</comment>
<comment type="alternative products">
    <event type="alternative splicing"/>
    <isoform>
        <id>Q8TBC5-1</id>
        <name>1</name>
        <sequence type="displayed"/>
    </isoform>
    <isoform>
        <id>Q8TBC5-2</id>
        <name>2</name>
        <sequence type="described" ref="VSP_019497"/>
    </isoform>
    <isoform>
        <id>Q8TBC5-3</id>
        <name>3</name>
        <sequence type="described" ref="VSP_043272"/>
    </isoform>
    <isoform>
        <id>Q8TBC5-4</id>
        <name>4</name>
        <sequence type="described" ref="VSP_047060 VSP_019497"/>
    </isoform>
</comment>
<comment type="similarity">
    <text evidence="8">Belongs to the krueppel C2H2-type zinc-finger protein family.</text>
</comment>
<organism>
    <name type="scientific">Homo sapiens</name>
    <name type="common">Human</name>
    <dbReference type="NCBI Taxonomy" id="9606"/>
    <lineage>
        <taxon>Eukaryota</taxon>
        <taxon>Metazoa</taxon>
        <taxon>Chordata</taxon>
        <taxon>Craniata</taxon>
        <taxon>Vertebrata</taxon>
        <taxon>Euteleostomi</taxon>
        <taxon>Mammalia</taxon>
        <taxon>Eutheria</taxon>
        <taxon>Euarchontoglires</taxon>
        <taxon>Primates</taxon>
        <taxon>Haplorrhini</taxon>
        <taxon>Catarrhini</taxon>
        <taxon>Hominidae</taxon>
        <taxon>Homo</taxon>
    </lineage>
</organism>
<feature type="chain" id="PRO_0000243921" description="Zinc finger and SCAN domain-containing protein 18">
    <location>
        <begin position="1"/>
        <end position="510"/>
    </location>
</feature>
<feature type="domain" description="SCAN box" evidence="2">
    <location>
        <begin position="49"/>
        <end position="131"/>
    </location>
</feature>
<feature type="zinc finger region" description="C2H2-type 1" evidence="1">
    <location>
        <begin position="413"/>
        <end position="435"/>
    </location>
</feature>
<feature type="zinc finger region" description="C2H2-type 2" evidence="1">
    <location>
        <begin position="441"/>
        <end position="463"/>
    </location>
</feature>
<feature type="region of interest" description="Disordered" evidence="3">
    <location>
        <begin position="1"/>
        <end position="40"/>
    </location>
</feature>
<feature type="region of interest" description="Disordered" evidence="3">
    <location>
        <begin position="172"/>
        <end position="191"/>
    </location>
</feature>
<feature type="region of interest" description="Disordered" evidence="3">
    <location>
        <begin position="201"/>
        <end position="231"/>
    </location>
</feature>
<feature type="region of interest" description="Disordered" evidence="3">
    <location>
        <begin position="263"/>
        <end position="413"/>
    </location>
</feature>
<feature type="region of interest" description="Disordered" evidence="3">
    <location>
        <begin position="461"/>
        <end position="510"/>
    </location>
</feature>
<feature type="compositionally biased region" description="Basic and acidic residues" evidence="3">
    <location>
        <begin position="214"/>
        <end position="231"/>
    </location>
</feature>
<feature type="compositionally biased region" description="Basic and acidic residues" evidence="3">
    <location>
        <begin position="263"/>
        <end position="273"/>
    </location>
</feature>
<feature type="compositionally biased region" description="Low complexity" evidence="3">
    <location>
        <begin position="288"/>
        <end position="299"/>
    </location>
</feature>
<feature type="compositionally biased region" description="Polar residues" evidence="3">
    <location>
        <begin position="344"/>
        <end position="356"/>
    </location>
</feature>
<feature type="compositionally biased region" description="Low complexity" evidence="3">
    <location>
        <begin position="491"/>
        <end position="501"/>
    </location>
</feature>
<feature type="splice variant" id="VSP_047060" description="In isoform 4." evidence="8">
    <location>
        <begin position="1"/>
        <end position="135"/>
    </location>
</feature>
<feature type="splice variant" id="VSP_043272" description="In isoform 3." evidence="6">
    <original>M</original>
    <variation>MRRVGGRADEDATAAGSLWVLAPPEPTGHLVIPGTSPLEPPCPWLDSHIFQCRFGKM</variation>
    <location>
        <position position="1"/>
    </location>
</feature>
<feature type="splice variant" id="VSP_019497" description="In isoform 2 and isoform 4." evidence="7">
    <location>
        <position position="280"/>
    </location>
</feature>
<feature type="sequence variant" id="VAR_026871" description="In dbSNP:rs2258557." evidence="4 5">
    <original>G</original>
    <variation>E</variation>
    <location>
        <position position="379"/>
    </location>
</feature>
<feature type="sequence conflict" description="In Ref. 2; BAB14332." evidence="8" ref="2">
    <original>G</original>
    <variation>S</variation>
    <location>
        <position position="389"/>
    </location>
</feature>
<sequence>MLPLEKAFASPRSSPAPPDLPTPGSAAGVQQEEPETIPERTPADLEFSRLRFREFVYQEAAGPHQTLARLHELCRQWLMPEARSKEQMLELLVLEQFLGILPDKVRPWVVAQYPESCKKAASLVEGLADVLEEPGMLLGSPAGSSSILSDGVYERHMDPLLLPGELASPSQALGAGEIPAPSETPWLSPDPLFLEQRRVREAKTEEDGPANTEQKLKSFPEDPQHLGEWGHLDPAEENLKSYRKLLLWGYQLSQPDAASRLDTEELRLVERDPQGSSLPEGGRRQESAGCACEEAAPAGVLPELPTEAPPGDALADPPSGTTEEEEEQPGKAPDPQDPQDAESDSATGSQRQSVIQQPAPDRGTAKLGTKRPHPEDGDGQSLEGVSSSGDSAGLEAGQGPGADEPGLSRGKPYACGECGEAFAWLSHLMEHHSSHGGRKRYACQGCWKTFHFSLALAEHQKTHEKEKSYALGGARGPQPSTREAQAGARAGGPPESVEGEAPPAPPEAQR</sequence>
<gene>
    <name type="primary">ZSCAN18</name>
    <name type="synonym">ZNF447</name>
</gene>
<protein>
    <recommendedName>
        <fullName>Zinc finger and SCAN domain-containing protein 18</fullName>
    </recommendedName>
    <alternativeName>
        <fullName>Zinc finger protein 447</fullName>
    </alternativeName>
</protein>
<evidence type="ECO:0000255" key="1">
    <source>
        <dbReference type="PROSITE-ProRule" id="PRU00042"/>
    </source>
</evidence>
<evidence type="ECO:0000255" key="2">
    <source>
        <dbReference type="PROSITE-ProRule" id="PRU00187"/>
    </source>
</evidence>
<evidence type="ECO:0000256" key="3">
    <source>
        <dbReference type="SAM" id="MobiDB-lite"/>
    </source>
</evidence>
<evidence type="ECO:0000269" key="4">
    <source>
    </source>
</evidence>
<evidence type="ECO:0000269" key="5">
    <source ref="1"/>
</evidence>
<evidence type="ECO:0000303" key="6">
    <source>
    </source>
</evidence>
<evidence type="ECO:0000303" key="7">
    <source>
    </source>
</evidence>
<evidence type="ECO:0000305" key="8"/>